<evidence type="ECO:0000255" key="1">
    <source>
        <dbReference type="PROSITE-ProRule" id="PRU00434"/>
    </source>
</evidence>
<evidence type="ECO:0000305" key="2"/>
<gene>
    <name type="primary">p29</name>
    <name type="ordered locus">MG290</name>
</gene>
<accession>P47532</accession>
<reference key="1">
    <citation type="journal article" date="1995" name="Science">
        <title>The minimal gene complement of Mycoplasma genitalium.</title>
        <authorList>
            <person name="Fraser C.M."/>
            <person name="Gocayne J.D."/>
            <person name="White O."/>
            <person name="Adams M.D."/>
            <person name="Clayton R.A."/>
            <person name="Fleischmann R.D."/>
            <person name="Bult C.J."/>
            <person name="Kerlavage A.R."/>
            <person name="Sutton G.G."/>
            <person name="Kelley J.M."/>
            <person name="Fritchman J.L."/>
            <person name="Weidman J.F."/>
            <person name="Small K.V."/>
            <person name="Sandusky M."/>
            <person name="Fuhrmann J.L."/>
            <person name="Nguyen D.T."/>
            <person name="Utterback T.R."/>
            <person name="Saudek D.M."/>
            <person name="Phillips C.A."/>
            <person name="Merrick J.M."/>
            <person name="Tomb J.-F."/>
            <person name="Dougherty B.A."/>
            <person name="Bott K.F."/>
            <person name="Hu P.-C."/>
            <person name="Lucier T.S."/>
            <person name="Peterson S.N."/>
            <person name="Smith H.O."/>
            <person name="Hutchison C.A. III"/>
            <person name="Venter J.C."/>
        </authorList>
    </citation>
    <scope>NUCLEOTIDE SEQUENCE [LARGE SCALE GENOMIC DNA]</scope>
    <source>
        <strain>ATCC 33530 / DSM 19775 / NCTC 10195 / G37</strain>
    </source>
</reference>
<protein>
    <recommendedName>
        <fullName>Probable ABC transporter ATP-binding protein p29</fullName>
    </recommendedName>
</protein>
<keyword id="KW-0067">ATP-binding</keyword>
<keyword id="KW-0547">Nucleotide-binding</keyword>
<keyword id="KW-1185">Reference proteome</keyword>
<keyword id="KW-0813">Transport</keyword>
<comment type="function">
    <text>Part of a high-affinity transport system.</text>
</comment>
<comment type="similarity">
    <text evidence="2">Belongs to the ABC transporter superfamily.</text>
</comment>
<feature type="chain" id="PRO_0000092678" description="Probable ABC transporter ATP-binding protein p29">
    <location>
        <begin position="1"/>
        <end position="245"/>
    </location>
</feature>
<feature type="domain" description="ABC transporter" evidence="1">
    <location>
        <begin position="7"/>
        <end position="245"/>
    </location>
</feature>
<feature type="binding site" evidence="1">
    <location>
        <begin position="39"/>
        <end position="46"/>
    </location>
    <ligand>
        <name>ATP</name>
        <dbReference type="ChEBI" id="CHEBI:30616"/>
    </ligand>
</feature>
<sequence length="245" mass="28006">MENKPILSFEKVSIIYKKAPLLQNISFKVMAKENVCLLGKSGVGKSSLLNSVTNTKIVKSGLVYFDGVASNKKEYKKLKKQCSYLDQIPNLIDTDYVYEAILRSAKQKLTWLQKLICFEPKWIKDKILAILKEVNLNDYVSCIIKDLSAGQKQRVEIAKLFFKSPKLLLVDEPTTGLDPLTASKIMDLITDFVKREKITLVFVTHDIDLALKYSTRIIALKNHALVLDRLTEKLTKEQLYKIYDN</sequence>
<dbReference type="EMBL" id="L43967">
    <property type="protein sequence ID" value="AAC71511.1"/>
    <property type="molecule type" value="Genomic_DNA"/>
</dbReference>
<dbReference type="PIR" id="A64232">
    <property type="entry name" value="A64232"/>
</dbReference>
<dbReference type="RefSeq" id="WP_010869409.1">
    <property type="nucleotide sequence ID" value="NC_000908.2"/>
</dbReference>
<dbReference type="SMR" id="P47532"/>
<dbReference type="FunCoup" id="P47532">
    <property type="interactions" value="115"/>
</dbReference>
<dbReference type="STRING" id="243273.MG_290"/>
<dbReference type="GeneID" id="88282452"/>
<dbReference type="KEGG" id="mge:MG_290"/>
<dbReference type="eggNOG" id="COG1120">
    <property type="taxonomic scope" value="Bacteria"/>
</dbReference>
<dbReference type="HOGENOM" id="CLU_000604_1_22_14"/>
<dbReference type="InParanoid" id="P47532"/>
<dbReference type="OrthoDB" id="389713at2"/>
<dbReference type="BioCyc" id="MGEN243273:G1GJ2-358-MONOMER"/>
<dbReference type="Proteomes" id="UP000000807">
    <property type="component" value="Chromosome"/>
</dbReference>
<dbReference type="GO" id="GO:0043190">
    <property type="term" value="C:ATP-binding cassette (ABC) transporter complex"/>
    <property type="evidence" value="ECO:0000318"/>
    <property type="project" value="GO_Central"/>
</dbReference>
<dbReference type="GO" id="GO:0005524">
    <property type="term" value="F:ATP binding"/>
    <property type="evidence" value="ECO:0007669"/>
    <property type="project" value="UniProtKB-KW"/>
</dbReference>
<dbReference type="GO" id="GO:0016887">
    <property type="term" value="F:ATP hydrolysis activity"/>
    <property type="evidence" value="ECO:0007669"/>
    <property type="project" value="InterPro"/>
</dbReference>
<dbReference type="GO" id="GO:0042626">
    <property type="term" value="F:ATPase-coupled transmembrane transporter activity"/>
    <property type="evidence" value="ECO:0000318"/>
    <property type="project" value="GO_Central"/>
</dbReference>
<dbReference type="Gene3D" id="3.40.50.300">
    <property type="entry name" value="P-loop containing nucleotide triphosphate hydrolases"/>
    <property type="match status" value="1"/>
</dbReference>
<dbReference type="InterPro" id="IPR003593">
    <property type="entry name" value="AAA+_ATPase"/>
</dbReference>
<dbReference type="InterPro" id="IPR003439">
    <property type="entry name" value="ABC_transporter-like_ATP-bd"/>
</dbReference>
<dbReference type="InterPro" id="IPR017871">
    <property type="entry name" value="ABC_transporter-like_CS"/>
</dbReference>
<dbReference type="InterPro" id="IPR050153">
    <property type="entry name" value="Metal_Ion_Import_ABC"/>
</dbReference>
<dbReference type="InterPro" id="IPR027417">
    <property type="entry name" value="P-loop_NTPase"/>
</dbReference>
<dbReference type="PANTHER" id="PTHR42734">
    <property type="entry name" value="METAL TRANSPORT SYSTEM ATP-BINDING PROTEIN TM_0124-RELATED"/>
    <property type="match status" value="1"/>
</dbReference>
<dbReference type="PANTHER" id="PTHR42734:SF6">
    <property type="entry name" value="MOLYBDATE IMPORT ATP-BINDING PROTEIN MOLC"/>
    <property type="match status" value="1"/>
</dbReference>
<dbReference type="Pfam" id="PF00005">
    <property type="entry name" value="ABC_tran"/>
    <property type="match status" value="1"/>
</dbReference>
<dbReference type="SMART" id="SM00382">
    <property type="entry name" value="AAA"/>
    <property type="match status" value="1"/>
</dbReference>
<dbReference type="SUPFAM" id="SSF52540">
    <property type="entry name" value="P-loop containing nucleoside triphosphate hydrolases"/>
    <property type="match status" value="1"/>
</dbReference>
<dbReference type="PROSITE" id="PS00211">
    <property type="entry name" value="ABC_TRANSPORTER_1"/>
    <property type="match status" value="1"/>
</dbReference>
<dbReference type="PROSITE" id="PS50893">
    <property type="entry name" value="ABC_TRANSPORTER_2"/>
    <property type="match status" value="1"/>
</dbReference>
<name>P29_MYCGE</name>
<organism>
    <name type="scientific">Mycoplasma genitalium (strain ATCC 33530 / DSM 19775 / NCTC 10195 / G37)</name>
    <name type="common">Mycoplasmoides genitalium</name>
    <dbReference type="NCBI Taxonomy" id="243273"/>
    <lineage>
        <taxon>Bacteria</taxon>
        <taxon>Bacillati</taxon>
        <taxon>Mycoplasmatota</taxon>
        <taxon>Mycoplasmoidales</taxon>
        <taxon>Mycoplasmoidaceae</taxon>
        <taxon>Mycoplasmoides</taxon>
    </lineage>
</organism>
<proteinExistence type="inferred from homology"/>